<accession>P61360</accession>
<accession>Q97NB6</accession>
<reference key="1">
    <citation type="journal article" date="2001" name="Science">
        <title>Complete genome sequence of a virulent isolate of Streptococcus pneumoniae.</title>
        <authorList>
            <person name="Tettelin H."/>
            <person name="Nelson K.E."/>
            <person name="Paulsen I.T."/>
            <person name="Eisen J.A."/>
            <person name="Read T.D."/>
            <person name="Peterson S.N."/>
            <person name="Heidelberg J.F."/>
            <person name="DeBoy R.T."/>
            <person name="Haft D.H."/>
            <person name="Dodson R.J."/>
            <person name="Durkin A.S."/>
            <person name="Gwinn M.L."/>
            <person name="Kolonay J.F."/>
            <person name="Nelson W.C."/>
            <person name="Peterson J.D."/>
            <person name="Umayam L.A."/>
            <person name="White O."/>
            <person name="Salzberg S.L."/>
            <person name="Lewis M.R."/>
            <person name="Radune D."/>
            <person name="Holtzapple E.K."/>
            <person name="Khouri H.M."/>
            <person name="Wolf A.M."/>
            <person name="Utterback T.R."/>
            <person name="Hansen C.L."/>
            <person name="McDonald L.A."/>
            <person name="Feldblyum T.V."/>
            <person name="Angiuoli S.V."/>
            <person name="Dickinson T."/>
            <person name="Hickey E.K."/>
            <person name="Holt I.E."/>
            <person name="Loftus B.J."/>
            <person name="Yang F."/>
            <person name="Smith H.O."/>
            <person name="Venter J.C."/>
            <person name="Dougherty B.A."/>
            <person name="Morrison D.A."/>
            <person name="Hollingshead S.K."/>
            <person name="Fraser C.M."/>
        </authorList>
    </citation>
    <scope>NUCLEOTIDE SEQUENCE [LARGE SCALE GENOMIC DNA]</scope>
    <source>
        <strain>ATCC BAA-334 / TIGR4</strain>
    </source>
</reference>
<evidence type="ECO:0000255" key="1">
    <source>
        <dbReference type="HAMAP-Rule" id="MF_00294"/>
    </source>
</evidence>
<sequence>MRVNITLEHKESGERLYLTSKNKRNTPDRLQLKKYSPKLRKHVVFTEVK</sequence>
<feature type="chain" id="PRO_0000170246" description="Large ribosomal subunit protein bL33C">
    <location>
        <begin position="1"/>
        <end position="49"/>
    </location>
</feature>
<name>RL333_STRPN</name>
<organism>
    <name type="scientific">Streptococcus pneumoniae serotype 4 (strain ATCC BAA-334 / TIGR4)</name>
    <dbReference type="NCBI Taxonomy" id="170187"/>
    <lineage>
        <taxon>Bacteria</taxon>
        <taxon>Bacillati</taxon>
        <taxon>Bacillota</taxon>
        <taxon>Bacilli</taxon>
        <taxon>Lactobacillales</taxon>
        <taxon>Streptococcaceae</taxon>
        <taxon>Streptococcus</taxon>
    </lineage>
</organism>
<keyword id="KW-1185">Reference proteome</keyword>
<keyword id="KW-0687">Ribonucleoprotein</keyword>
<keyword id="KW-0689">Ribosomal protein</keyword>
<comment type="similarity">
    <text evidence="1">Belongs to the bacterial ribosomal protein bL33 family.</text>
</comment>
<gene>
    <name type="primary">rpmG3</name>
    <name type="synonym">rpmG-3</name>
    <name type="ordered locus">SP_2135</name>
</gene>
<dbReference type="EMBL" id="AE005672">
    <property type="protein sequence ID" value="AAK76193.1"/>
    <property type="molecule type" value="Genomic_DNA"/>
</dbReference>
<dbReference type="PIR" id="H95249">
    <property type="entry name" value="H95249"/>
</dbReference>
<dbReference type="SMR" id="P61360"/>
<dbReference type="PaxDb" id="170187-SP_2135"/>
<dbReference type="EnsemblBacteria" id="AAK76193">
    <property type="protein sequence ID" value="AAK76193"/>
    <property type="gene ID" value="SP_2135"/>
</dbReference>
<dbReference type="KEGG" id="spn:SP_2135"/>
<dbReference type="eggNOG" id="COG0267">
    <property type="taxonomic scope" value="Bacteria"/>
</dbReference>
<dbReference type="PhylomeDB" id="P61360"/>
<dbReference type="BioCyc" id="SPNE170187:G1FZB-2227-MONOMER"/>
<dbReference type="Proteomes" id="UP000000585">
    <property type="component" value="Chromosome"/>
</dbReference>
<dbReference type="GO" id="GO:0005737">
    <property type="term" value="C:cytoplasm"/>
    <property type="evidence" value="ECO:0007669"/>
    <property type="project" value="UniProtKB-ARBA"/>
</dbReference>
<dbReference type="GO" id="GO:1990904">
    <property type="term" value="C:ribonucleoprotein complex"/>
    <property type="evidence" value="ECO:0007669"/>
    <property type="project" value="UniProtKB-KW"/>
</dbReference>
<dbReference type="GO" id="GO:0005840">
    <property type="term" value="C:ribosome"/>
    <property type="evidence" value="ECO:0007669"/>
    <property type="project" value="UniProtKB-KW"/>
</dbReference>
<dbReference type="GO" id="GO:0003735">
    <property type="term" value="F:structural constituent of ribosome"/>
    <property type="evidence" value="ECO:0007669"/>
    <property type="project" value="InterPro"/>
</dbReference>
<dbReference type="GO" id="GO:0006412">
    <property type="term" value="P:translation"/>
    <property type="evidence" value="ECO:0007669"/>
    <property type="project" value="UniProtKB-UniRule"/>
</dbReference>
<dbReference type="Gene3D" id="2.20.28.120">
    <property type="entry name" value="Ribosomal protein L33"/>
    <property type="match status" value="1"/>
</dbReference>
<dbReference type="HAMAP" id="MF_00294">
    <property type="entry name" value="Ribosomal_bL33"/>
    <property type="match status" value="1"/>
</dbReference>
<dbReference type="InterPro" id="IPR001705">
    <property type="entry name" value="Ribosomal_bL33"/>
</dbReference>
<dbReference type="InterPro" id="IPR018264">
    <property type="entry name" value="Ribosomal_bL33_CS"/>
</dbReference>
<dbReference type="InterPro" id="IPR038584">
    <property type="entry name" value="Ribosomal_bL33_sf"/>
</dbReference>
<dbReference type="InterPro" id="IPR011332">
    <property type="entry name" value="Ribosomal_zn-bd"/>
</dbReference>
<dbReference type="NCBIfam" id="NF001764">
    <property type="entry name" value="PRK00504.1"/>
    <property type="match status" value="1"/>
</dbReference>
<dbReference type="NCBIfam" id="NF001860">
    <property type="entry name" value="PRK00595.1"/>
    <property type="match status" value="1"/>
</dbReference>
<dbReference type="NCBIfam" id="TIGR01023">
    <property type="entry name" value="rpmG_bact"/>
    <property type="match status" value="1"/>
</dbReference>
<dbReference type="PANTHER" id="PTHR43168">
    <property type="entry name" value="50S RIBOSOMAL PROTEIN L33, CHLOROPLASTIC"/>
    <property type="match status" value="1"/>
</dbReference>
<dbReference type="PANTHER" id="PTHR43168:SF2">
    <property type="entry name" value="LARGE RIBOSOMAL SUBUNIT PROTEIN BL33C"/>
    <property type="match status" value="1"/>
</dbReference>
<dbReference type="Pfam" id="PF00471">
    <property type="entry name" value="Ribosomal_L33"/>
    <property type="match status" value="1"/>
</dbReference>
<dbReference type="SUPFAM" id="SSF57829">
    <property type="entry name" value="Zn-binding ribosomal proteins"/>
    <property type="match status" value="1"/>
</dbReference>
<dbReference type="PROSITE" id="PS00582">
    <property type="entry name" value="RIBOSOMAL_L33"/>
    <property type="match status" value="1"/>
</dbReference>
<protein>
    <recommendedName>
        <fullName evidence="1">Large ribosomal subunit protein bL33C</fullName>
    </recommendedName>
    <alternativeName>
        <fullName>50S ribosomal protein L33 type 3</fullName>
    </alternativeName>
</protein>
<proteinExistence type="inferred from homology"/>